<comment type="similarity">
    <text evidence="1">Belongs to the bacterial ribosomal protein bS21 family.</text>
</comment>
<protein>
    <recommendedName>
        <fullName evidence="1">Small ribosomal subunit protein bS21</fullName>
    </recommendedName>
    <alternativeName>
        <fullName evidence="2">30S ribosomal protein S21</fullName>
    </alternativeName>
</protein>
<dbReference type="EMBL" id="CP000033">
    <property type="protein sequence ID" value="AAV43041.1"/>
    <property type="molecule type" value="Genomic_DNA"/>
</dbReference>
<dbReference type="RefSeq" id="WP_002880182.1">
    <property type="nucleotide sequence ID" value="NC_006814.3"/>
</dbReference>
<dbReference type="RefSeq" id="YP_194072.1">
    <property type="nucleotide sequence ID" value="NC_006814.3"/>
</dbReference>
<dbReference type="SMR" id="Q5FJT3"/>
<dbReference type="STRING" id="272621.LBA1205"/>
<dbReference type="GeneID" id="97459612"/>
<dbReference type="KEGG" id="lac:LBA1205"/>
<dbReference type="PATRIC" id="fig|272621.13.peg.1143"/>
<dbReference type="eggNOG" id="COG0828">
    <property type="taxonomic scope" value="Bacteria"/>
</dbReference>
<dbReference type="HOGENOM" id="CLU_159258_3_2_9"/>
<dbReference type="OrthoDB" id="9799244at2"/>
<dbReference type="BioCyc" id="LACI272621:G1G49-1192-MONOMER"/>
<dbReference type="PRO" id="PR:Q5FJT3"/>
<dbReference type="Proteomes" id="UP000006381">
    <property type="component" value="Chromosome"/>
</dbReference>
<dbReference type="GO" id="GO:1990904">
    <property type="term" value="C:ribonucleoprotein complex"/>
    <property type="evidence" value="ECO:0007669"/>
    <property type="project" value="UniProtKB-KW"/>
</dbReference>
<dbReference type="GO" id="GO:0005840">
    <property type="term" value="C:ribosome"/>
    <property type="evidence" value="ECO:0007669"/>
    <property type="project" value="UniProtKB-KW"/>
</dbReference>
<dbReference type="GO" id="GO:0003735">
    <property type="term" value="F:structural constituent of ribosome"/>
    <property type="evidence" value="ECO:0007669"/>
    <property type="project" value="InterPro"/>
</dbReference>
<dbReference type="GO" id="GO:0006412">
    <property type="term" value="P:translation"/>
    <property type="evidence" value="ECO:0007669"/>
    <property type="project" value="UniProtKB-UniRule"/>
</dbReference>
<dbReference type="Gene3D" id="1.20.5.1150">
    <property type="entry name" value="Ribosomal protein S8"/>
    <property type="match status" value="1"/>
</dbReference>
<dbReference type="HAMAP" id="MF_00358">
    <property type="entry name" value="Ribosomal_bS21"/>
    <property type="match status" value="1"/>
</dbReference>
<dbReference type="InterPro" id="IPR001911">
    <property type="entry name" value="Ribosomal_bS21"/>
</dbReference>
<dbReference type="InterPro" id="IPR018278">
    <property type="entry name" value="Ribosomal_bS21_CS"/>
</dbReference>
<dbReference type="InterPro" id="IPR038380">
    <property type="entry name" value="Ribosomal_bS21_sf"/>
</dbReference>
<dbReference type="NCBIfam" id="TIGR00030">
    <property type="entry name" value="S21p"/>
    <property type="match status" value="1"/>
</dbReference>
<dbReference type="PANTHER" id="PTHR21109">
    <property type="entry name" value="MITOCHONDRIAL 28S RIBOSOMAL PROTEIN S21"/>
    <property type="match status" value="1"/>
</dbReference>
<dbReference type="PANTHER" id="PTHR21109:SF22">
    <property type="entry name" value="SMALL RIBOSOMAL SUBUNIT PROTEIN BS21"/>
    <property type="match status" value="1"/>
</dbReference>
<dbReference type="Pfam" id="PF01165">
    <property type="entry name" value="Ribosomal_S21"/>
    <property type="match status" value="1"/>
</dbReference>
<dbReference type="PRINTS" id="PR00976">
    <property type="entry name" value="RIBOSOMALS21"/>
</dbReference>
<dbReference type="PROSITE" id="PS01181">
    <property type="entry name" value="RIBOSOMAL_S21"/>
    <property type="match status" value="1"/>
</dbReference>
<gene>
    <name evidence="1" type="primary">rpsU</name>
    <name type="ordered locus">LBA1205</name>
</gene>
<evidence type="ECO:0000255" key="1">
    <source>
        <dbReference type="HAMAP-Rule" id="MF_00358"/>
    </source>
</evidence>
<evidence type="ECO:0000305" key="2"/>
<accession>Q5FJT3</accession>
<keyword id="KW-1185">Reference proteome</keyword>
<keyword id="KW-0687">Ribonucleoprotein</keyword>
<keyword id="KW-0689">Ribosomal protein</keyword>
<feature type="chain" id="PRO_0000266693" description="Small ribosomal subunit protein bS21">
    <location>
        <begin position="1"/>
        <end position="58"/>
    </location>
</feature>
<reference key="1">
    <citation type="journal article" date="2005" name="Proc. Natl. Acad. Sci. U.S.A.">
        <title>Complete genome sequence of the probiotic lactic acid bacterium Lactobacillus acidophilus NCFM.</title>
        <authorList>
            <person name="Altermann E."/>
            <person name="Russell W.M."/>
            <person name="Azcarate-Peril M.A."/>
            <person name="Barrangou R."/>
            <person name="Buck B.L."/>
            <person name="McAuliffe O."/>
            <person name="Souther N."/>
            <person name="Dobson A."/>
            <person name="Duong T."/>
            <person name="Callanan M."/>
            <person name="Lick S."/>
            <person name="Hamrick A."/>
            <person name="Cano R."/>
            <person name="Klaenhammer T.R."/>
        </authorList>
    </citation>
    <scope>NUCLEOTIDE SEQUENCE [LARGE SCALE GENOMIC DNA]</scope>
    <source>
        <strain>ATCC 700396 / NCK56 / N2 / NCFM</strain>
    </source>
</reference>
<proteinExistence type="inferred from homology"/>
<name>RS21_LACAC</name>
<sequence length="58" mass="7096">MAKTIVHENESIDDALRRFKRSVSRSGTLQEYRKREFYEKPSVRRKLKSEAARKRRHY</sequence>
<organism>
    <name type="scientific">Lactobacillus acidophilus (strain ATCC 700396 / NCK56 / N2 / NCFM)</name>
    <dbReference type="NCBI Taxonomy" id="272621"/>
    <lineage>
        <taxon>Bacteria</taxon>
        <taxon>Bacillati</taxon>
        <taxon>Bacillota</taxon>
        <taxon>Bacilli</taxon>
        <taxon>Lactobacillales</taxon>
        <taxon>Lactobacillaceae</taxon>
        <taxon>Lactobacillus</taxon>
    </lineage>
</organism>